<feature type="chain" id="PRO_0000161158" description="Elongation factor Ts">
    <location>
        <begin position="1"/>
        <end position="292"/>
    </location>
</feature>
<feature type="region of interest" description="Involved in Mg(2+) ion dislocation from EF-Tu" evidence="1">
    <location>
        <begin position="79"/>
        <end position="82"/>
    </location>
</feature>
<dbReference type="EMBL" id="BA000026">
    <property type="protein sequence ID" value="BAC44745.1"/>
    <property type="molecule type" value="Genomic_DNA"/>
</dbReference>
<dbReference type="RefSeq" id="WP_011077774.1">
    <property type="nucleotide sequence ID" value="NC_004432.1"/>
</dbReference>
<dbReference type="SMR" id="Q8EUG8"/>
<dbReference type="FunCoup" id="Q8EUG8">
    <property type="interactions" value="258"/>
</dbReference>
<dbReference type="STRING" id="272633.gene:10732079"/>
<dbReference type="KEGG" id="mpe:MYPE9580"/>
<dbReference type="eggNOG" id="COG0264">
    <property type="taxonomic scope" value="Bacteria"/>
</dbReference>
<dbReference type="HOGENOM" id="CLU_047155_0_2_14"/>
<dbReference type="InParanoid" id="Q8EUG8"/>
<dbReference type="Proteomes" id="UP000002522">
    <property type="component" value="Chromosome"/>
</dbReference>
<dbReference type="GO" id="GO:0005737">
    <property type="term" value="C:cytoplasm"/>
    <property type="evidence" value="ECO:0007669"/>
    <property type="project" value="UniProtKB-SubCell"/>
</dbReference>
<dbReference type="GO" id="GO:0003746">
    <property type="term" value="F:translation elongation factor activity"/>
    <property type="evidence" value="ECO:0007669"/>
    <property type="project" value="UniProtKB-UniRule"/>
</dbReference>
<dbReference type="CDD" id="cd14275">
    <property type="entry name" value="UBA_EF-Ts"/>
    <property type="match status" value="1"/>
</dbReference>
<dbReference type="FunFam" id="1.10.8.10:FF:000001">
    <property type="entry name" value="Elongation factor Ts"/>
    <property type="match status" value="1"/>
</dbReference>
<dbReference type="Gene3D" id="1.10.286.20">
    <property type="match status" value="1"/>
</dbReference>
<dbReference type="Gene3D" id="1.10.8.10">
    <property type="entry name" value="DNA helicase RuvA subunit, C-terminal domain"/>
    <property type="match status" value="1"/>
</dbReference>
<dbReference type="Gene3D" id="3.30.479.20">
    <property type="entry name" value="Elongation factor Ts, dimerisation domain"/>
    <property type="match status" value="2"/>
</dbReference>
<dbReference type="HAMAP" id="MF_00050">
    <property type="entry name" value="EF_Ts"/>
    <property type="match status" value="1"/>
</dbReference>
<dbReference type="InterPro" id="IPR036402">
    <property type="entry name" value="EF-Ts_dimer_sf"/>
</dbReference>
<dbReference type="InterPro" id="IPR001816">
    <property type="entry name" value="Transl_elong_EFTs/EF1B"/>
</dbReference>
<dbReference type="InterPro" id="IPR014039">
    <property type="entry name" value="Transl_elong_EFTs/EF1B_dimer"/>
</dbReference>
<dbReference type="InterPro" id="IPR018101">
    <property type="entry name" value="Transl_elong_Ts_CS"/>
</dbReference>
<dbReference type="InterPro" id="IPR009060">
    <property type="entry name" value="UBA-like_sf"/>
</dbReference>
<dbReference type="NCBIfam" id="TIGR00116">
    <property type="entry name" value="tsf"/>
    <property type="match status" value="1"/>
</dbReference>
<dbReference type="PANTHER" id="PTHR11741">
    <property type="entry name" value="ELONGATION FACTOR TS"/>
    <property type="match status" value="1"/>
</dbReference>
<dbReference type="PANTHER" id="PTHR11741:SF0">
    <property type="entry name" value="ELONGATION FACTOR TS, MITOCHONDRIAL"/>
    <property type="match status" value="1"/>
</dbReference>
<dbReference type="Pfam" id="PF00889">
    <property type="entry name" value="EF_TS"/>
    <property type="match status" value="1"/>
</dbReference>
<dbReference type="SUPFAM" id="SSF54713">
    <property type="entry name" value="Elongation factor Ts (EF-Ts), dimerisation domain"/>
    <property type="match status" value="2"/>
</dbReference>
<dbReference type="SUPFAM" id="SSF46934">
    <property type="entry name" value="UBA-like"/>
    <property type="match status" value="1"/>
</dbReference>
<dbReference type="PROSITE" id="PS01126">
    <property type="entry name" value="EF_TS_1"/>
    <property type="match status" value="1"/>
</dbReference>
<dbReference type="PROSITE" id="PS01127">
    <property type="entry name" value="EF_TS_2"/>
    <property type="match status" value="1"/>
</dbReference>
<sequence>MSISADKIKELRSRTQAGFMDCKKALEESDNDIEKAIAWLREKGISKAAKKASAIAAEGQTTVVEKGDNCVVLEVNSQTDFVSKNADFVKFVKDVAEVILKNKSADNVDSLVLPNKKTVADTAIDLTATIGEKISVRRAQLLTKKKGQSFGVYQHFNGRISAAVLIDGEVSSEVGKDVAMQVASMNPKFVNSSQVDKKWKDEEEKLLIQKTIEEGKPKEFAEKIVAGRMVKMLAEVCLEEQPFIKDNGITIIKYLKQNKANKVLEMVRFEVGEGIEKQEANFADEVKAQMKK</sequence>
<name>EFTS_MALP2</name>
<evidence type="ECO:0000255" key="1">
    <source>
        <dbReference type="HAMAP-Rule" id="MF_00050"/>
    </source>
</evidence>
<gene>
    <name evidence="1" type="primary">tsf</name>
    <name type="ordered locus">MYPE9580</name>
</gene>
<accession>Q8EUG8</accession>
<comment type="function">
    <text evidence="1">Associates with the EF-Tu.GDP complex and induces the exchange of GDP to GTP. It remains bound to the aminoacyl-tRNA.EF-Tu.GTP complex up to the GTP hydrolysis stage on the ribosome.</text>
</comment>
<comment type="subcellular location">
    <subcellularLocation>
        <location evidence="1">Cytoplasm</location>
    </subcellularLocation>
</comment>
<comment type="similarity">
    <text evidence="1">Belongs to the EF-Ts family.</text>
</comment>
<protein>
    <recommendedName>
        <fullName evidence="1">Elongation factor Ts</fullName>
        <shortName evidence="1">EF-Ts</shortName>
    </recommendedName>
</protein>
<keyword id="KW-0963">Cytoplasm</keyword>
<keyword id="KW-0251">Elongation factor</keyword>
<keyword id="KW-0648">Protein biosynthesis</keyword>
<keyword id="KW-1185">Reference proteome</keyword>
<reference key="1">
    <citation type="journal article" date="2002" name="Nucleic Acids Res.">
        <title>The complete genomic sequence of Mycoplasma penetrans, an intracellular bacterial pathogen in humans.</title>
        <authorList>
            <person name="Sasaki Y."/>
            <person name="Ishikawa J."/>
            <person name="Yamashita A."/>
            <person name="Oshima K."/>
            <person name="Kenri T."/>
            <person name="Furuya K."/>
            <person name="Yoshino C."/>
            <person name="Horino A."/>
            <person name="Shiba T."/>
            <person name="Sasaki T."/>
            <person name="Hattori M."/>
        </authorList>
    </citation>
    <scope>NUCLEOTIDE SEQUENCE [LARGE SCALE GENOMIC DNA]</scope>
    <source>
        <strain>HF-2</strain>
    </source>
</reference>
<organism>
    <name type="scientific">Malacoplasma penetrans (strain HF-2)</name>
    <name type="common">Mycoplasma penetrans</name>
    <dbReference type="NCBI Taxonomy" id="272633"/>
    <lineage>
        <taxon>Bacteria</taxon>
        <taxon>Bacillati</taxon>
        <taxon>Mycoplasmatota</taxon>
        <taxon>Mycoplasmoidales</taxon>
        <taxon>Mycoplasmoidaceae</taxon>
        <taxon>Malacoplasma</taxon>
    </lineage>
</organism>
<proteinExistence type="inferred from homology"/>